<dbReference type="EMBL" id="CP000866">
    <property type="protein sequence ID" value="ABX12121.1"/>
    <property type="molecule type" value="Genomic_DNA"/>
</dbReference>
<dbReference type="RefSeq" id="WP_012214608.1">
    <property type="nucleotide sequence ID" value="NC_010085.1"/>
</dbReference>
<dbReference type="SMR" id="A9A2Z3"/>
<dbReference type="FunCoup" id="A9A2Z3">
    <property type="interactions" value="189"/>
</dbReference>
<dbReference type="STRING" id="436308.Nmar_0225"/>
<dbReference type="EnsemblBacteria" id="ABX12121">
    <property type="protein sequence ID" value="ABX12121"/>
    <property type="gene ID" value="Nmar_0225"/>
</dbReference>
<dbReference type="GeneID" id="5773621"/>
<dbReference type="KEGG" id="nmr:Nmar_0225"/>
<dbReference type="eggNOG" id="arCOG01751">
    <property type="taxonomic scope" value="Archaea"/>
</dbReference>
<dbReference type="HOGENOM" id="CLU_084513_4_0_2"/>
<dbReference type="InParanoid" id="A9A2Z3"/>
<dbReference type="OrthoDB" id="25810at2157"/>
<dbReference type="PhylomeDB" id="A9A2Z3"/>
<dbReference type="Proteomes" id="UP000000792">
    <property type="component" value="Chromosome"/>
</dbReference>
<dbReference type="GO" id="GO:0005737">
    <property type="term" value="C:cytoplasm"/>
    <property type="evidence" value="ECO:0007669"/>
    <property type="project" value="UniProtKB-SubCell"/>
</dbReference>
<dbReference type="GO" id="GO:1990904">
    <property type="term" value="C:ribonucleoprotein complex"/>
    <property type="evidence" value="ECO:0007669"/>
    <property type="project" value="UniProtKB-KW"/>
</dbReference>
<dbReference type="GO" id="GO:0005840">
    <property type="term" value="C:ribosome"/>
    <property type="evidence" value="ECO:0007669"/>
    <property type="project" value="UniProtKB-KW"/>
</dbReference>
<dbReference type="GO" id="GO:0004526">
    <property type="term" value="F:ribonuclease P activity"/>
    <property type="evidence" value="ECO:0007669"/>
    <property type="project" value="UniProtKB-UniRule"/>
</dbReference>
<dbReference type="GO" id="GO:0019843">
    <property type="term" value="F:rRNA binding"/>
    <property type="evidence" value="ECO:0007669"/>
    <property type="project" value="UniProtKB-KW"/>
</dbReference>
<dbReference type="GO" id="GO:0003735">
    <property type="term" value="F:structural constituent of ribosome"/>
    <property type="evidence" value="ECO:0007669"/>
    <property type="project" value="InterPro"/>
</dbReference>
<dbReference type="GO" id="GO:0006412">
    <property type="term" value="P:translation"/>
    <property type="evidence" value="ECO:0007669"/>
    <property type="project" value="UniProtKB-UniRule"/>
</dbReference>
<dbReference type="GO" id="GO:0001682">
    <property type="term" value="P:tRNA 5'-leader removal"/>
    <property type="evidence" value="ECO:0007669"/>
    <property type="project" value="UniProtKB-UniRule"/>
</dbReference>
<dbReference type="FunFam" id="3.30.1330.30:FF:000020">
    <property type="entry name" value="50S ribosomal protein L7Ae"/>
    <property type="match status" value="1"/>
</dbReference>
<dbReference type="Gene3D" id="3.30.1330.30">
    <property type="match status" value="1"/>
</dbReference>
<dbReference type="HAMAP" id="MF_00326">
    <property type="entry name" value="Ribosomal_eL8"/>
    <property type="match status" value="1"/>
</dbReference>
<dbReference type="InterPro" id="IPR050257">
    <property type="entry name" value="eL8/uL1-like"/>
</dbReference>
<dbReference type="InterPro" id="IPR029064">
    <property type="entry name" value="Ribosomal_eL30-like_sf"/>
</dbReference>
<dbReference type="InterPro" id="IPR004038">
    <property type="entry name" value="Ribosomal_eL8/eL30/eS12/Gad45"/>
</dbReference>
<dbReference type="InterPro" id="IPR018492">
    <property type="entry name" value="Ribosomal_eL8/Nhp2"/>
</dbReference>
<dbReference type="InterPro" id="IPR022481">
    <property type="entry name" value="Ribosomal_eL8_arc"/>
</dbReference>
<dbReference type="NCBIfam" id="TIGR03677">
    <property type="entry name" value="eL8_ribo"/>
    <property type="match status" value="1"/>
</dbReference>
<dbReference type="PANTHER" id="PTHR23105">
    <property type="entry name" value="RIBOSOMAL PROTEIN L7AE FAMILY MEMBER"/>
    <property type="match status" value="1"/>
</dbReference>
<dbReference type="Pfam" id="PF01248">
    <property type="entry name" value="Ribosomal_L7Ae"/>
    <property type="match status" value="1"/>
</dbReference>
<dbReference type="PRINTS" id="PR00881">
    <property type="entry name" value="L7ARS6FAMILY"/>
</dbReference>
<dbReference type="PRINTS" id="PR00884">
    <property type="entry name" value="RIBOSOMALHS6"/>
</dbReference>
<dbReference type="SUPFAM" id="SSF55315">
    <property type="entry name" value="L30e-like"/>
    <property type="match status" value="1"/>
</dbReference>
<reference key="1">
    <citation type="journal article" date="2010" name="Proc. Natl. Acad. Sci. U.S.A.">
        <title>Nitrosopumilus maritimus genome reveals unique mechanisms for nitrification and autotrophy in globally distributed marine crenarchaea.</title>
        <authorList>
            <person name="Walker C.B."/>
            <person name="de la Torre J.R."/>
            <person name="Klotz M.G."/>
            <person name="Urakawa H."/>
            <person name="Pinel N."/>
            <person name="Arp D.J."/>
            <person name="Brochier-Armanet C."/>
            <person name="Chain P.S."/>
            <person name="Chan P.P."/>
            <person name="Gollabgir A."/>
            <person name="Hemp J."/>
            <person name="Hugler M."/>
            <person name="Karr E.A."/>
            <person name="Konneke M."/>
            <person name="Shin M."/>
            <person name="Lawton T.J."/>
            <person name="Lowe T."/>
            <person name="Martens-Habbena W."/>
            <person name="Sayavedra-Soto L.A."/>
            <person name="Lang D."/>
            <person name="Sievert S.M."/>
            <person name="Rosenzweig A.C."/>
            <person name="Manning G."/>
            <person name="Stahl D.A."/>
        </authorList>
    </citation>
    <scope>NUCLEOTIDE SEQUENCE [LARGE SCALE GENOMIC DNA]</scope>
    <source>
        <strain>SCM1</strain>
    </source>
</reference>
<accession>A9A2Z3</accession>
<proteinExistence type="inferred from homology"/>
<organism>
    <name type="scientific">Nitrosopumilus maritimus (strain SCM1)</name>
    <dbReference type="NCBI Taxonomy" id="436308"/>
    <lineage>
        <taxon>Archaea</taxon>
        <taxon>Nitrososphaerota</taxon>
        <taxon>Nitrososphaeria</taxon>
        <taxon>Nitrosopumilales</taxon>
        <taxon>Nitrosopumilaceae</taxon>
        <taxon>Nitrosopumilus</taxon>
    </lineage>
</organism>
<evidence type="ECO:0000255" key="1">
    <source>
        <dbReference type="HAMAP-Rule" id="MF_00326"/>
    </source>
</evidence>
<evidence type="ECO:0000305" key="2"/>
<gene>
    <name evidence="1" type="primary">rpl7ae</name>
    <name type="ordered locus">Nmar_0225</name>
</gene>
<name>RL7A_NITMS</name>
<feature type="chain" id="PRO_1000194099" description="Large ribosomal subunit protein eL8">
    <location>
        <begin position="1"/>
        <end position="128"/>
    </location>
</feature>
<sequence>MGKAYYVKFETPEDLVNPILEAVRVASTSGKVKKGTNEATKAIERGTSKLIVIAEDVEPPEVVAHLPILCEEQGAAFAFVPSKQELGKSLGIDITSAAAAILDAGDAQHIVDQVVSSIAKIKGGKTDQ</sequence>
<keyword id="KW-0963">Cytoplasm</keyword>
<keyword id="KW-1185">Reference proteome</keyword>
<keyword id="KW-0687">Ribonucleoprotein</keyword>
<keyword id="KW-0689">Ribosomal protein</keyword>
<keyword id="KW-0694">RNA-binding</keyword>
<keyword id="KW-0699">rRNA-binding</keyword>
<keyword id="KW-0819">tRNA processing</keyword>
<protein>
    <recommendedName>
        <fullName evidence="1">Large ribosomal subunit protein eL8</fullName>
    </recommendedName>
    <alternativeName>
        <fullName evidence="2">50S ribosomal protein L7Ae</fullName>
    </alternativeName>
    <alternativeName>
        <fullName evidence="1">Ribosomal protein L8e</fullName>
    </alternativeName>
</protein>
<comment type="function">
    <text evidence="1">Multifunctional RNA-binding protein that recognizes the K-turn motif in ribosomal RNA, the RNA component of RNase P, box H/ACA, box C/D and box C'/D' sRNAs.</text>
</comment>
<comment type="subunit">
    <text evidence="1">Part of the 50S ribosomal subunit. Probably part of the RNase P complex.</text>
</comment>
<comment type="subcellular location">
    <subcellularLocation>
        <location evidence="1">Cytoplasm</location>
    </subcellularLocation>
</comment>
<comment type="similarity">
    <text evidence="1">Belongs to the eukaryotic ribosomal protein eL8 family.</text>
</comment>